<organism>
    <name type="scientific">Pelodictyon phaeoclathratiforme (strain DSM 5477 / BU-1)</name>
    <dbReference type="NCBI Taxonomy" id="324925"/>
    <lineage>
        <taxon>Bacteria</taxon>
        <taxon>Pseudomonadati</taxon>
        <taxon>Chlorobiota</taxon>
        <taxon>Chlorobiia</taxon>
        <taxon>Chlorobiales</taxon>
        <taxon>Chlorobiaceae</taxon>
        <taxon>Chlorobium/Pelodictyon group</taxon>
        <taxon>Pelodictyon</taxon>
    </lineage>
</organism>
<comment type="function">
    <text evidence="1">Catalyzes a trans-dehydration via an enolate intermediate.</text>
</comment>
<comment type="catalytic activity">
    <reaction evidence="1">
        <text>3-dehydroquinate = 3-dehydroshikimate + H2O</text>
        <dbReference type="Rhea" id="RHEA:21096"/>
        <dbReference type="ChEBI" id="CHEBI:15377"/>
        <dbReference type="ChEBI" id="CHEBI:16630"/>
        <dbReference type="ChEBI" id="CHEBI:32364"/>
        <dbReference type="EC" id="4.2.1.10"/>
    </reaction>
</comment>
<comment type="pathway">
    <text evidence="1">Metabolic intermediate biosynthesis; chorismate biosynthesis; chorismate from D-erythrose 4-phosphate and phosphoenolpyruvate: step 3/7.</text>
</comment>
<comment type="subunit">
    <text evidence="1">Homododecamer.</text>
</comment>
<comment type="similarity">
    <text evidence="1">Belongs to the type-II 3-dehydroquinase family.</text>
</comment>
<dbReference type="EC" id="4.2.1.10" evidence="1"/>
<dbReference type="EMBL" id="CP001110">
    <property type="protein sequence ID" value="ACF43482.1"/>
    <property type="molecule type" value="Genomic_DNA"/>
</dbReference>
<dbReference type="SMR" id="B4SGR9"/>
<dbReference type="STRING" id="324925.Ppha_1210"/>
<dbReference type="KEGG" id="pph:Ppha_1210"/>
<dbReference type="eggNOG" id="COG0757">
    <property type="taxonomic scope" value="Bacteria"/>
</dbReference>
<dbReference type="HOGENOM" id="CLU_090968_2_0_10"/>
<dbReference type="OrthoDB" id="9790793at2"/>
<dbReference type="UniPathway" id="UPA00053">
    <property type="reaction ID" value="UER00086"/>
</dbReference>
<dbReference type="Proteomes" id="UP000002724">
    <property type="component" value="Chromosome"/>
</dbReference>
<dbReference type="GO" id="GO:0003855">
    <property type="term" value="F:3-dehydroquinate dehydratase activity"/>
    <property type="evidence" value="ECO:0007669"/>
    <property type="project" value="UniProtKB-UniRule"/>
</dbReference>
<dbReference type="GO" id="GO:0008652">
    <property type="term" value="P:amino acid biosynthetic process"/>
    <property type="evidence" value="ECO:0007669"/>
    <property type="project" value="UniProtKB-KW"/>
</dbReference>
<dbReference type="GO" id="GO:0009073">
    <property type="term" value="P:aromatic amino acid family biosynthetic process"/>
    <property type="evidence" value="ECO:0007669"/>
    <property type="project" value="UniProtKB-KW"/>
</dbReference>
<dbReference type="GO" id="GO:0009423">
    <property type="term" value="P:chorismate biosynthetic process"/>
    <property type="evidence" value="ECO:0007669"/>
    <property type="project" value="UniProtKB-UniRule"/>
</dbReference>
<dbReference type="GO" id="GO:0019631">
    <property type="term" value="P:quinate catabolic process"/>
    <property type="evidence" value="ECO:0007669"/>
    <property type="project" value="TreeGrafter"/>
</dbReference>
<dbReference type="CDD" id="cd00466">
    <property type="entry name" value="DHQase_II"/>
    <property type="match status" value="1"/>
</dbReference>
<dbReference type="Gene3D" id="3.40.50.9100">
    <property type="entry name" value="Dehydroquinase, class II"/>
    <property type="match status" value="1"/>
</dbReference>
<dbReference type="HAMAP" id="MF_00169">
    <property type="entry name" value="AroQ"/>
    <property type="match status" value="1"/>
</dbReference>
<dbReference type="InterPro" id="IPR001874">
    <property type="entry name" value="DHquinase_II"/>
</dbReference>
<dbReference type="InterPro" id="IPR018509">
    <property type="entry name" value="DHquinase_II_CS"/>
</dbReference>
<dbReference type="InterPro" id="IPR036441">
    <property type="entry name" value="DHquinase_II_sf"/>
</dbReference>
<dbReference type="NCBIfam" id="TIGR01088">
    <property type="entry name" value="aroQ"/>
    <property type="match status" value="1"/>
</dbReference>
<dbReference type="NCBIfam" id="NF003805">
    <property type="entry name" value="PRK05395.1-2"/>
    <property type="match status" value="1"/>
</dbReference>
<dbReference type="NCBIfam" id="NF003806">
    <property type="entry name" value="PRK05395.1-3"/>
    <property type="match status" value="1"/>
</dbReference>
<dbReference type="NCBIfam" id="NF003807">
    <property type="entry name" value="PRK05395.1-4"/>
    <property type="match status" value="1"/>
</dbReference>
<dbReference type="PANTHER" id="PTHR21272">
    <property type="entry name" value="CATABOLIC 3-DEHYDROQUINASE"/>
    <property type="match status" value="1"/>
</dbReference>
<dbReference type="PANTHER" id="PTHR21272:SF3">
    <property type="entry name" value="CATABOLIC 3-DEHYDROQUINASE"/>
    <property type="match status" value="1"/>
</dbReference>
<dbReference type="Pfam" id="PF01220">
    <property type="entry name" value="DHquinase_II"/>
    <property type="match status" value="1"/>
</dbReference>
<dbReference type="PIRSF" id="PIRSF001399">
    <property type="entry name" value="DHquinase_II"/>
    <property type="match status" value="1"/>
</dbReference>
<dbReference type="SUPFAM" id="SSF52304">
    <property type="entry name" value="Type II 3-dehydroquinate dehydratase"/>
    <property type="match status" value="1"/>
</dbReference>
<dbReference type="PROSITE" id="PS01029">
    <property type="entry name" value="DEHYDROQUINASE_II"/>
    <property type="match status" value="1"/>
</dbReference>
<feature type="chain" id="PRO_1000097611" description="3-dehydroquinate dehydratase">
    <location>
        <begin position="1"/>
        <end position="151"/>
    </location>
</feature>
<feature type="active site" description="Proton acceptor" evidence="1">
    <location>
        <position position="26"/>
    </location>
</feature>
<feature type="active site" description="Proton donor" evidence="1">
    <location>
        <position position="103"/>
    </location>
</feature>
<feature type="binding site" evidence="1">
    <location>
        <position position="77"/>
    </location>
    <ligand>
        <name>substrate</name>
    </ligand>
</feature>
<feature type="binding site" evidence="1">
    <location>
        <position position="83"/>
    </location>
    <ligand>
        <name>substrate</name>
    </ligand>
</feature>
<feature type="binding site" evidence="1">
    <location>
        <position position="90"/>
    </location>
    <ligand>
        <name>substrate</name>
    </ligand>
</feature>
<feature type="binding site" evidence="1">
    <location>
        <begin position="104"/>
        <end position="105"/>
    </location>
    <ligand>
        <name>substrate</name>
    </ligand>
</feature>
<feature type="binding site" evidence="1">
    <location>
        <position position="114"/>
    </location>
    <ligand>
        <name>substrate</name>
    </ligand>
</feature>
<feature type="site" description="Transition state stabilizer" evidence="1">
    <location>
        <position position="21"/>
    </location>
</feature>
<name>AROQ_PELPB</name>
<evidence type="ECO:0000255" key="1">
    <source>
        <dbReference type="HAMAP-Rule" id="MF_00169"/>
    </source>
</evidence>
<sequence length="151" mass="16541">MMSAMTILVLNGPNLSRLGKREPEVYGRQTLDDINRELAASFPELSFDFFQTESEGALLEKLFNCEDKGGYRGVVLNAGALTHYSIALRDAISAITIPVVEVHLSNIYAREEFRRKSVISEVCAGVISGFGANSYHLGVRALLGMTSLEPD</sequence>
<accession>B4SGR9</accession>
<proteinExistence type="inferred from homology"/>
<reference key="1">
    <citation type="submission" date="2008-06" db="EMBL/GenBank/DDBJ databases">
        <title>Complete sequence of Pelodictyon phaeoclathratiforme BU-1.</title>
        <authorList>
            <consortium name="US DOE Joint Genome Institute"/>
            <person name="Lucas S."/>
            <person name="Copeland A."/>
            <person name="Lapidus A."/>
            <person name="Glavina del Rio T."/>
            <person name="Dalin E."/>
            <person name="Tice H."/>
            <person name="Bruce D."/>
            <person name="Goodwin L."/>
            <person name="Pitluck S."/>
            <person name="Schmutz J."/>
            <person name="Larimer F."/>
            <person name="Land M."/>
            <person name="Hauser L."/>
            <person name="Kyrpides N."/>
            <person name="Mikhailova N."/>
            <person name="Liu Z."/>
            <person name="Li T."/>
            <person name="Zhao F."/>
            <person name="Overmann J."/>
            <person name="Bryant D.A."/>
            <person name="Richardson P."/>
        </authorList>
    </citation>
    <scope>NUCLEOTIDE SEQUENCE [LARGE SCALE GENOMIC DNA]</scope>
    <source>
        <strain>DSM 5477 / BU-1</strain>
    </source>
</reference>
<keyword id="KW-0028">Amino-acid biosynthesis</keyword>
<keyword id="KW-0057">Aromatic amino acid biosynthesis</keyword>
<keyword id="KW-0456">Lyase</keyword>
<keyword id="KW-1185">Reference proteome</keyword>
<gene>
    <name evidence="1" type="primary">aroQ</name>
    <name type="ordered locus">Ppha_1210</name>
</gene>
<protein>
    <recommendedName>
        <fullName evidence="1">3-dehydroquinate dehydratase</fullName>
        <shortName evidence="1">3-dehydroquinase</shortName>
        <ecNumber evidence="1">4.2.1.10</ecNumber>
    </recommendedName>
    <alternativeName>
        <fullName evidence="1">Type II DHQase</fullName>
    </alternativeName>
</protein>